<feature type="chain" id="PRO_0000341277" description="Olfactory receptor 8U9">
    <location>
        <begin position="1"/>
        <end position="309"/>
    </location>
</feature>
<feature type="topological domain" description="Extracellular" evidence="1">
    <location>
        <begin position="1"/>
        <end position="28"/>
    </location>
</feature>
<feature type="transmembrane region" description="Helical; Name=1" evidence="1">
    <location>
        <begin position="29"/>
        <end position="49"/>
    </location>
</feature>
<feature type="topological domain" description="Cytoplasmic" evidence="1">
    <location>
        <begin position="50"/>
        <end position="56"/>
    </location>
</feature>
<feature type="transmembrane region" description="Helical; Name=2" evidence="1">
    <location>
        <begin position="57"/>
        <end position="77"/>
    </location>
</feature>
<feature type="topological domain" description="Extracellular" evidence="1">
    <location>
        <begin position="78"/>
        <end position="97"/>
    </location>
</feature>
<feature type="transmembrane region" description="Helical; Name=3" evidence="1">
    <location>
        <begin position="98"/>
        <end position="118"/>
    </location>
</feature>
<feature type="topological domain" description="Cytoplasmic" evidence="1">
    <location>
        <begin position="119"/>
        <end position="143"/>
    </location>
</feature>
<feature type="transmembrane region" description="Helical; Name=4" evidence="1">
    <location>
        <begin position="144"/>
        <end position="164"/>
    </location>
</feature>
<feature type="topological domain" description="Extracellular" evidence="1">
    <location>
        <begin position="165"/>
        <end position="204"/>
    </location>
</feature>
<feature type="transmembrane region" description="Helical; Name=5" evidence="1">
    <location>
        <begin position="205"/>
        <end position="225"/>
    </location>
</feature>
<feature type="topological domain" description="Cytoplasmic" evidence="1">
    <location>
        <begin position="226"/>
        <end position="239"/>
    </location>
</feature>
<feature type="transmembrane region" description="Helical; Name=6" evidence="1">
    <location>
        <begin position="240"/>
        <end position="260"/>
    </location>
</feature>
<feature type="topological domain" description="Extracellular" evidence="1">
    <location>
        <begin position="261"/>
        <end position="272"/>
    </location>
</feature>
<feature type="transmembrane region" description="Helical; Name=7" evidence="1">
    <location>
        <begin position="273"/>
        <end position="293"/>
    </location>
</feature>
<feature type="topological domain" description="Cytoplasmic" evidence="1">
    <location>
        <begin position="294"/>
        <end position="309"/>
    </location>
</feature>
<feature type="glycosylation site" description="N-linked (GlcNAc...) asparagine" evidence="1">
    <location>
        <position position="5"/>
    </location>
</feature>
<feature type="disulfide bond" evidence="2">
    <location>
        <begin position="97"/>
        <end position="179"/>
    </location>
</feature>
<gene>
    <name type="primary">OR8U9</name>
</gene>
<proteinExistence type="inferred from homology"/>
<organism>
    <name type="scientific">Homo sapiens</name>
    <name type="common">Human</name>
    <dbReference type="NCBI Taxonomy" id="9606"/>
    <lineage>
        <taxon>Eukaryota</taxon>
        <taxon>Metazoa</taxon>
        <taxon>Chordata</taxon>
        <taxon>Craniata</taxon>
        <taxon>Vertebrata</taxon>
        <taxon>Euteleostomi</taxon>
        <taxon>Mammalia</taxon>
        <taxon>Eutheria</taxon>
        <taxon>Euarchontoglires</taxon>
        <taxon>Primates</taxon>
        <taxon>Haplorrhini</taxon>
        <taxon>Catarrhini</taxon>
        <taxon>Hominidae</taxon>
        <taxon>Homo</taxon>
    </lineage>
</organism>
<keyword id="KW-1003">Cell membrane</keyword>
<keyword id="KW-1015">Disulfide bond</keyword>
<keyword id="KW-0297">G-protein coupled receptor</keyword>
<keyword id="KW-0325">Glycoprotein</keyword>
<keyword id="KW-0472">Membrane</keyword>
<keyword id="KW-0552">Olfaction</keyword>
<keyword id="KW-0675">Receptor</keyword>
<keyword id="KW-1185">Reference proteome</keyword>
<keyword id="KW-0716">Sensory transduction</keyword>
<keyword id="KW-0807">Transducer</keyword>
<keyword id="KW-0812">Transmembrane</keyword>
<keyword id="KW-1133">Transmembrane helix</keyword>
<comment type="function">
    <text evidence="3">Odorant receptor.</text>
</comment>
<comment type="subcellular location">
    <subcellularLocation>
        <location>Cell membrane</location>
        <topology>Multi-pass membrane protein</topology>
    </subcellularLocation>
</comment>
<comment type="similarity">
    <text evidence="2">Belongs to the G-protein coupled receptor 1 family.</text>
</comment>
<protein>
    <recommendedName>
        <fullName>Olfactory receptor 8U9</fullName>
    </recommendedName>
</protein>
<accession>P0C7N5</accession>
<sequence length="309" mass="35054">MTQINCTQVTEFILVGLTDRQELKMPLFVLFLSIYLFTVVGNLGLILLIRTDEKLNTPMYFFLSNLAFVDFCYSSVITPKMLGNFLYKQNSISFNACAAQLGCFLAFMTAECLLLASMAYDRYVAICNPLMYMVVMSPGICIQLVAAPHSYSILVALFHTILTFRLSYCHSNIVNHFYCDDMPLLRLTCSDTRFKQLWIFACAGIMFISSLLIVFVSYMFIISAILRMHSAEGRQKAFSTCGSHMLAVTIFYGTLIFMYLQPSSSHALDTDKMASVFYTVIIPMLNPLIYSLQNKEVKEALKKIIINKN</sequence>
<name>OR8U9_HUMAN</name>
<dbReference type="EMBL" id="CH471076">
    <property type="protein sequence ID" value="EAW73667.1"/>
    <property type="molecule type" value="Genomic_DNA"/>
</dbReference>
<dbReference type="RefSeq" id="NP_001013375.1">
    <property type="nucleotide sequence ID" value="NM_001013357.1"/>
</dbReference>
<dbReference type="SMR" id="P0C7N5"/>
<dbReference type="FunCoup" id="P0C7N5">
    <property type="interactions" value="416"/>
</dbReference>
<dbReference type="GlyCosmos" id="P0C7N5">
    <property type="glycosylation" value="1 site, No reported glycans"/>
</dbReference>
<dbReference type="GlyGen" id="P0C7N5">
    <property type="glycosylation" value="1 site"/>
</dbReference>
<dbReference type="BioMuta" id="HGNC:29166"/>
<dbReference type="DMDM" id="190359932"/>
<dbReference type="jPOST" id="P0C7N5"/>
<dbReference type="DNASU" id="504190"/>
<dbReference type="Ensembl" id="ENST00000626074.1">
    <property type="protein sequence ID" value="ENSP00000487204.1"/>
    <property type="gene ID" value="ENSG00000281038.1"/>
</dbReference>
<dbReference type="GeneID" id="504190"/>
<dbReference type="KEGG" id="hsa:504190"/>
<dbReference type="MANE-Select" id="ENST00000626074.1">
    <property type="protein sequence ID" value="ENSP00000487204.1"/>
    <property type="RefSeq nucleotide sequence ID" value="NM_001013357.1"/>
    <property type="RefSeq protein sequence ID" value="NP_001013375.1"/>
</dbReference>
<dbReference type="UCSC" id="uc031yko.1">
    <property type="organism name" value="human"/>
</dbReference>
<dbReference type="AGR" id="HGNC:29166"/>
<dbReference type="CTD" id="504190"/>
<dbReference type="GeneCards" id="OR8U9"/>
<dbReference type="HGNC" id="HGNC:29166">
    <property type="gene designation" value="OR8U9"/>
</dbReference>
<dbReference type="neXtProt" id="NX_P0C7N5"/>
<dbReference type="PharmGKB" id="PA142671223"/>
<dbReference type="InParanoid" id="P0C7N5"/>
<dbReference type="PAN-GO" id="P0C7N5">
    <property type="GO annotations" value="4 GO annotations based on evolutionary models"/>
</dbReference>
<dbReference type="PathwayCommons" id="P0C7N5"/>
<dbReference type="Reactome" id="R-HSA-9752946">
    <property type="pathway name" value="Expression and translocation of olfactory receptors"/>
</dbReference>
<dbReference type="BioGRID-ORCS" id="504190">
    <property type="hits" value="0 hits in 1 CRISPR screen"/>
</dbReference>
<dbReference type="GenomeRNAi" id="504190"/>
<dbReference type="Pharos" id="P0C7N5">
    <property type="development level" value="Tdark"/>
</dbReference>
<dbReference type="PRO" id="PR:P0C7N5"/>
<dbReference type="Proteomes" id="UP000005640">
    <property type="component" value="Unplaced"/>
</dbReference>
<dbReference type="RNAct" id="P0C7N5">
    <property type="molecule type" value="protein"/>
</dbReference>
<dbReference type="GO" id="GO:0005886">
    <property type="term" value="C:plasma membrane"/>
    <property type="evidence" value="ECO:0007669"/>
    <property type="project" value="UniProtKB-SubCell"/>
</dbReference>
<dbReference type="GO" id="GO:0004930">
    <property type="term" value="F:G protein-coupled receptor activity"/>
    <property type="evidence" value="ECO:0007669"/>
    <property type="project" value="UniProtKB-KW"/>
</dbReference>
<dbReference type="GO" id="GO:0004984">
    <property type="term" value="F:olfactory receptor activity"/>
    <property type="evidence" value="ECO:0007669"/>
    <property type="project" value="InterPro"/>
</dbReference>
<dbReference type="CDD" id="cd15413">
    <property type="entry name" value="7tmA_OR8K-like"/>
    <property type="match status" value="1"/>
</dbReference>
<dbReference type="FunFam" id="1.20.1070.10:FF:000004">
    <property type="entry name" value="Olfactory receptor"/>
    <property type="match status" value="1"/>
</dbReference>
<dbReference type="Gene3D" id="1.20.1070.10">
    <property type="entry name" value="Rhodopsin 7-helix transmembrane proteins"/>
    <property type="match status" value="1"/>
</dbReference>
<dbReference type="InterPro" id="IPR000276">
    <property type="entry name" value="GPCR_Rhodpsn"/>
</dbReference>
<dbReference type="InterPro" id="IPR017452">
    <property type="entry name" value="GPCR_Rhodpsn_7TM"/>
</dbReference>
<dbReference type="InterPro" id="IPR000725">
    <property type="entry name" value="Olfact_rcpt"/>
</dbReference>
<dbReference type="PANTHER" id="PTHR48018">
    <property type="entry name" value="OLFACTORY RECEPTOR"/>
    <property type="match status" value="1"/>
</dbReference>
<dbReference type="Pfam" id="PF13853">
    <property type="entry name" value="7tm_4"/>
    <property type="match status" value="1"/>
</dbReference>
<dbReference type="PRINTS" id="PR00237">
    <property type="entry name" value="GPCRRHODOPSN"/>
</dbReference>
<dbReference type="PRINTS" id="PR00245">
    <property type="entry name" value="OLFACTORYR"/>
</dbReference>
<dbReference type="SUPFAM" id="SSF81321">
    <property type="entry name" value="Family A G protein-coupled receptor-like"/>
    <property type="match status" value="1"/>
</dbReference>
<dbReference type="PROSITE" id="PS00237">
    <property type="entry name" value="G_PROTEIN_RECEP_F1_1"/>
    <property type="match status" value="1"/>
</dbReference>
<dbReference type="PROSITE" id="PS50262">
    <property type="entry name" value="G_PROTEIN_RECEP_F1_2"/>
    <property type="match status" value="1"/>
</dbReference>
<reference key="1">
    <citation type="submission" date="2005-07" db="EMBL/GenBank/DDBJ databases">
        <authorList>
            <person name="Mural R.J."/>
            <person name="Istrail S."/>
            <person name="Sutton G.G."/>
            <person name="Florea L."/>
            <person name="Halpern A.L."/>
            <person name="Mobarry C.M."/>
            <person name="Lippert R."/>
            <person name="Walenz B."/>
            <person name="Shatkay H."/>
            <person name="Dew I."/>
            <person name="Miller J.R."/>
            <person name="Flanigan M.J."/>
            <person name="Edwards N.J."/>
            <person name="Bolanos R."/>
            <person name="Fasulo D."/>
            <person name="Halldorsson B.V."/>
            <person name="Hannenhalli S."/>
            <person name="Turner R."/>
            <person name="Yooseph S."/>
            <person name="Lu F."/>
            <person name="Nusskern D.R."/>
            <person name="Shue B.C."/>
            <person name="Zheng X.H."/>
            <person name="Zhong F."/>
            <person name="Delcher A.L."/>
            <person name="Huson D.H."/>
            <person name="Kravitz S.A."/>
            <person name="Mouchard L."/>
            <person name="Reinert K."/>
            <person name="Remington K.A."/>
            <person name="Clark A.G."/>
            <person name="Waterman M.S."/>
            <person name="Eichler E.E."/>
            <person name="Adams M.D."/>
            <person name="Hunkapiller M.W."/>
            <person name="Myers E.W."/>
            <person name="Venter J.C."/>
        </authorList>
    </citation>
    <scope>NUCLEOTIDE SEQUENCE [LARGE SCALE GENOMIC DNA]</scope>
</reference>
<evidence type="ECO:0000255" key="1"/>
<evidence type="ECO:0000255" key="2">
    <source>
        <dbReference type="PROSITE-ProRule" id="PRU00521"/>
    </source>
</evidence>
<evidence type="ECO:0000305" key="3"/>